<dbReference type="EC" id="3.6.5.-"/>
<dbReference type="EMBL" id="CR382138">
    <property type="protein sequence ID" value="CAG88769.2"/>
    <property type="molecule type" value="Genomic_DNA"/>
</dbReference>
<dbReference type="RefSeq" id="XP_460462.2">
    <property type="nucleotide sequence ID" value="XM_460462.2"/>
</dbReference>
<dbReference type="SMR" id="Q6BMV8"/>
<dbReference type="FunCoup" id="Q6BMV8">
    <property type="interactions" value="753"/>
</dbReference>
<dbReference type="STRING" id="284592.Q6BMV8"/>
<dbReference type="GeneID" id="2903965"/>
<dbReference type="KEGG" id="dha:DEHA2F02222g"/>
<dbReference type="VEuPathDB" id="FungiDB:DEHA2F02222g"/>
<dbReference type="eggNOG" id="KOG0462">
    <property type="taxonomic scope" value="Eukaryota"/>
</dbReference>
<dbReference type="HOGENOM" id="CLU_009995_3_1_1"/>
<dbReference type="InParanoid" id="Q6BMV8"/>
<dbReference type="OMA" id="QVKCDEN"/>
<dbReference type="OrthoDB" id="1074at2759"/>
<dbReference type="Proteomes" id="UP000000599">
    <property type="component" value="Chromosome F"/>
</dbReference>
<dbReference type="GO" id="GO:0005743">
    <property type="term" value="C:mitochondrial inner membrane"/>
    <property type="evidence" value="ECO:0007669"/>
    <property type="project" value="UniProtKB-SubCell"/>
</dbReference>
<dbReference type="GO" id="GO:0005759">
    <property type="term" value="C:mitochondrial matrix"/>
    <property type="evidence" value="ECO:0007669"/>
    <property type="project" value="UniProtKB-UniRule"/>
</dbReference>
<dbReference type="GO" id="GO:0005525">
    <property type="term" value="F:GTP binding"/>
    <property type="evidence" value="ECO:0007669"/>
    <property type="project" value="UniProtKB-UniRule"/>
</dbReference>
<dbReference type="GO" id="GO:0003924">
    <property type="term" value="F:GTPase activity"/>
    <property type="evidence" value="ECO:0007669"/>
    <property type="project" value="UniProtKB-UniRule"/>
</dbReference>
<dbReference type="GO" id="GO:0097177">
    <property type="term" value="F:mitochondrial ribosome binding"/>
    <property type="evidence" value="ECO:0007669"/>
    <property type="project" value="TreeGrafter"/>
</dbReference>
<dbReference type="GO" id="GO:0045727">
    <property type="term" value="P:positive regulation of translation"/>
    <property type="evidence" value="ECO:0007669"/>
    <property type="project" value="UniProtKB-UniRule"/>
</dbReference>
<dbReference type="GO" id="GO:0006412">
    <property type="term" value="P:translation"/>
    <property type="evidence" value="ECO:0007669"/>
    <property type="project" value="UniProtKB-KW"/>
</dbReference>
<dbReference type="CDD" id="cd03699">
    <property type="entry name" value="EF4_II"/>
    <property type="match status" value="1"/>
</dbReference>
<dbReference type="CDD" id="cd16260">
    <property type="entry name" value="EF4_III"/>
    <property type="match status" value="1"/>
</dbReference>
<dbReference type="CDD" id="cd01890">
    <property type="entry name" value="LepA"/>
    <property type="match status" value="1"/>
</dbReference>
<dbReference type="CDD" id="cd03709">
    <property type="entry name" value="lepA_C"/>
    <property type="match status" value="1"/>
</dbReference>
<dbReference type="FunFam" id="3.40.50.300:FF:000078">
    <property type="entry name" value="Elongation factor 4"/>
    <property type="match status" value="1"/>
</dbReference>
<dbReference type="FunFam" id="2.40.30.10:FF:000015">
    <property type="entry name" value="Translation factor GUF1, mitochondrial"/>
    <property type="match status" value="1"/>
</dbReference>
<dbReference type="FunFam" id="3.30.70.240:FF:000007">
    <property type="entry name" value="Translation factor GUF1, mitochondrial"/>
    <property type="match status" value="1"/>
</dbReference>
<dbReference type="FunFam" id="3.30.70.2570:FF:000001">
    <property type="entry name" value="Translation factor GUF1, mitochondrial"/>
    <property type="match status" value="1"/>
</dbReference>
<dbReference type="FunFam" id="3.30.70.870:FF:000004">
    <property type="entry name" value="Translation factor GUF1, mitochondrial"/>
    <property type="match status" value="1"/>
</dbReference>
<dbReference type="Gene3D" id="3.30.70.240">
    <property type="match status" value="1"/>
</dbReference>
<dbReference type="Gene3D" id="3.30.70.2570">
    <property type="entry name" value="Elongation factor 4, C-terminal domain"/>
    <property type="match status" value="1"/>
</dbReference>
<dbReference type="Gene3D" id="3.30.70.870">
    <property type="entry name" value="Elongation Factor G (Translational Gtpase), domain 3"/>
    <property type="match status" value="1"/>
</dbReference>
<dbReference type="Gene3D" id="3.40.50.300">
    <property type="entry name" value="P-loop containing nucleotide triphosphate hydrolases"/>
    <property type="match status" value="1"/>
</dbReference>
<dbReference type="Gene3D" id="2.40.30.10">
    <property type="entry name" value="Translation factors"/>
    <property type="match status" value="1"/>
</dbReference>
<dbReference type="HAMAP" id="MF_00071">
    <property type="entry name" value="LepA"/>
    <property type="match status" value="1"/>
</dbReference>
<dbReference type="InterPro" id="IPR006297">
    <property type="entry name" value="EF-4"/>
</dbReference>
<dbReference type="InterPro" id="IPR035647">
    <property type="entry name" value="EFG_III/V"/>
</dbReference>
<dbReference type="InterPro" id="IPR000640">
    <property type="entry name" value="EFG_V-like"/>
</dbReference>
<dbReference type="InterPro" id="IPR004161">
    <property type="entry name" value="EFTu-like_2"/>
</dbReference>
<dbReference type="InterPro" id="IPR031157">
    <property type="entry name" value="G_TR_CS"/>
</dbReference>
<dbReference type="InterPro" id="IPR038363">
    <property type="entry name" value="LepA_C_sf"/>
</dbReference>
<dbReference type="InterPro" id="IPR013842">
    <property type="entry name" value="LepA_CTD"/>
</dbReference>
<dbReference type="InterPro" id="IPR035654">
    <property type="entry name" value="LepA_IV"/>
</dbReference>
<dbReference type="InterPro" id="IPR027417">
    <property type="entry name" value="P-loop_NTPase"/>
</dbReference>
<dbReference type="InterPro" id="IPR005225">
    <property type="entry name" value="Small_GTP-bd"/>
</dbReference>
<dbReference type="InterPro" id="IPR000795">
    <property type="entry name" value="T_Tr_GTP-bd_dom"/>
</dbReference>
<dbReference type="InterPro" id="IPR009000">
    <property type="entry name" value="Transl_B-barrel_sf"/>
</dbReference>
<dbReference type="NCBIfam" id="TIGR01393">
    <property type="entry name" value="lepA"/>
    <property type="match status" value="1"/>
</dbReference>
<dbReference type="NCBIfam" id="TIGR00231">
    <property type="entry name" value="small_GTP"/>
    <property type="match status" value="1"/>
</dbReference>
<dbReference type="PANTHER" id="PTHR43512:SF7">
    <property type="entry name" value="TRANSLATION FACTOR GUF1, MITOCHONDRIAL"/>
    <property type="match status" value="1"/>
</dbReference>
<dbReference type="PANTHER" id="PTHR43512">
    <property type="entry name" value="TRANSLATION FACTOR GUF1-RELATED"/>
    <property type="match status" value="1"/>
</dbReference>
<dbReference type="Pfam" id="PF00679">
    <property type="entry name" value="EFG_C"/>
    <property type="match status" value="1"/>
</dbReference>
<dbReference type="Pfam" id="PF00009">
    <property type="entry name" value="GTP_EFTU"/>
    <property type="match status" value="1"/>
</dbReference>
<dbReference type="Pfam" id="PF03144">
    <property type="entry name" value="GTP_EFTU_D2"/>
    <property type="match status" value="1"/>
</dbReference>
<dbReference type="Pfam" id="PF06421">
    <property type="entry name" value="LepA_C"/>
    <property type="match status" value="1"/>
</dbReference>
<dbReference type="PRINTS" id="PR00315">
    <property type="entry name" value="ELONGATNFCT"/>
</dbReference>
<dbReference type="SUPFAM" id="SSF54980">
    <property type="entry name" value="EF-G C-terminal domain-like"/>
    <property type="match status" value="2"/>
</dbReference>
<dbReference type="SUPFAM" id="SSF52540">
    <property type="entry name" value="P-loop containing nucleoside triphosphate hydrolases"/>
    <property type="match status" value="1"/>
</dbReference>
<dbReference type="SUPFAM" id="SSF50447">
    <property type="entry name" value="Translation proteins"/>
    <property type="match status" value="1"/>
</dbReference>
<dbReference type="PROSITE" id="PS00301">
    <property type="entry name" value="G_TR_1"/>
    <property type="match status" value="1"/>
</dbReference>
<dbReference type="PROSITE" id="PS51722">
    <property type="entry name" value="G_TR_2"/>
    <property type="match status" value="1"/>
</dbReference>
<protein>
    <recommendedName>
        <fullName evidence="1">Translation factor GUF1, mitochondrial</fullName>
        <ecNumber>3.6.5.-</ecNumber>
    </recommendedName>
    <alternativeName>
        <fullName evidence="1">Elongation factor 4 homolog</fullName>
        <shortName evidence="1">EF-4</shortName>
    </alternativeName>
    <alternativeName>
        <fullName evidence="1">GTPase GUF1</fullName>
    </alternativeName>
    <alternativeName>
        <fullName evidence="1">Ribosomal back-translocase</fullName>
    </alternativeName>
</protein>
<accession>Q6BMV8</accession>
<name>GUF1_DEBHA</name>
<evidence type="ECO:0000255" key="1">
    <source>
        <dbReference type="HAMAP-Rule" id="MF_03137"/>
    </source>
</evidence>
<evidence type="ECO:0000305" key="2"/>
<reference key="1">
    <citation type="journal article" date="2004" name="Nature">
        <title>Genome evolution in yeasts.</title>
        <authorList>
            <person name="Dujon B."/>
            <person name="Sherman D."/>
            <person name="Fischer G."/>
            <person name="Durrens P."/>
            <person name="Casaregola S."/>
            <person name="Lafontaine I."/>
            <person name="de Montigny J."/>
            <person name="Marck C."/>
            <person name="Neuveglise C."/>
            <person name="Talla E."/>
            <person name="Goffard N."/>
            <person name="Frangeul L."/>
            <person name="Aigle M."/>
            <person name="Anthouard V."/>
            <person name="Babour A."/>
            <person name="Barbe V."/>
            <person name="Barnay S."/>
            <person name="Blanchin S."/>
            <person name="Beckerich J.-M."/>
            <person name="Beyne E."/>
            <person name="Bleykasten C."/>
            <person name="Boisrame A."/>
            <person name="Boyer J."/>
            <person name="Cattolico L."/>
            <person name="Confanioleri F."/>
            <person name="de Daruvar A."/>
            <person name="Despons L."/>
            <person name="Fabre E."/>
            <person name="Fairhead C."/>
            <person name="Ferry-Dumazet H."/>
            <person name="Groppi A."/>
            <person name="Hantraye F."/>
            <person name="Hennequin C."/>
            <person name="Jauniaux N."/>
            <person name="Joyet P."/>
            <person name="Kachouri R."/>
            <person name="Kerrest A."/>
            <person name="Koszul R."/>
            <person name="Lemaire M."/>
            <person name="Lesur I."/>
            <person name="Ma L."/>
            <person name="Muller H."/>
            <person name="Nicaud J.-M."/>
            <person name="Nikolski M."/>
            <person name="Oztas S."/>
            <person name="Ozier-Kalogeropoulos O."/>
            <person name="Pellenz S."/>
            <person name="Potier S."/>
            <person name="Richard G.-F."/>
            <person name="Straub M.-L."/>
            <person name="Suleau A."/>
            <person name="Swennen D."/>
            <person name="Tekaia F."/>
            <person name="Wesolowski-Louvel M."/>
            <person name="Westhof E."/>
            <person name="Wirth B."/>
            <person name="Zeniou-Meyer M."/>
            <person name="Zivanovic Y."/>
            <person name="Bolotin-Fukuhara M."/>
            <person name="Thierry A."/>
            <person name="Bouchier C."/>
            <person name="Caudron B."/>
            <person name="Scarpelli C."/>
            <person name="Gaillardin C."/>
            <person name="Weissenbach J."/>
            <person name="Wincker P."/>
            <person name="Souciet J.-L."/>
        </authorList>
    </citation>
    <scope>NUCLEOTIDE SEQUENCE [LARGE SCALE GENOMIC DNA]</scope>
    <source>
        <strain>ATCC 36239 / CBS 767 / BCRC 21394 / JCM 1990 / NBRC 0083 / IGC 2968</strain>
    </source>
</reference>
<feature type="chain" id="PRO_0000402884" description="Translation factor GUF1, mitochondrial">
    <location>
        <begin position="1"/>
        <end position="636"/>
    </location>
</feature>
<feature type="domain" description="tr-type G">
    <location>
        <begin position="35"/>
        <end position="218"/>
    </location>
</feature>
<feature type="binding site" evidence="1">
    <location>
        <begin position="44"/>
        <end position="51"/>
    </location>
    <ligand>
        <name>GTP</name>
        <dbReference type="ChEBI" id="CHEBI:37565"/>
    </ligand>
</feature>
<feature type="binding site" evidence="1">
    <location>
        <begin position="111"/>
        <end position="115"/>
    </location>
    <ligand>
        <name>GTP</name>
        <dbReference type="ChEBI" id="CHEBI:37565"/>
    </ligand>
</feature>
<feature type="binding site" evidence="1">
    <location>
        <begin position="165"/>
        <end position="168"/>
    </location>
    <ligand>
        <name>GTP</name>
        <dbReference type="ChEBI" id="CHEBI:37565"/>
    </ligand>
</feature>
<gene>
    <name evidence="1" type="primary">GUF1</name>
    <name type="ordered locus">DEHA2F02222g</name>
</gene>
<proteinExistence type="inferred from homology"/>
<organism>
    <name type="scientific">Debaryomyces hansenii (strain ATCC 36239 / CBS 767 / BCRC 21394 / JCM 1990 / NBRC 0083 / IGC 2968)</name>
    <name type="common">Yeast</name>
    <name type="synonym">Torulaspora hansenii</name>
    <dbReference type="NCBI Taxonomy" id="284592"/>
    <lineage>
        <taxon>Eukaryota</taxon>
        <taxon>Fungi</taxon>
        <taxon>Dikarya</taxon>
        <taxon>Ascomycota</taxon>
        <taxon>Saccharomycotina</taxon>
        <taxon>Pichiomycetes</taxon>
        <taxon>Debaryomycetaceae</taxon>
        <taxon>Debaryomyces</taxon>
    </lineage>
</organism>
<keyword id="KW-0342">GTP-binding</keyword>
<keyword id="KW-0378">Hydrolase</keyword>
<keyword id="KW-0472">Membrane</keyword>
<keyword id="KW-0496">Mitochondrion</keyword>
<keyword id="KW-0999">Mitochondrion inner membrane</keyword>
<keyword id="KW-0547">Nucleotide-binding</keyword>
<keyword id="KW-0648">Protein biosynthesis</keyword>
<keyword id="KW-1185">Reference proteome</keyword>
<comment type="function">
    <text evidence="1">Promotes mitochondrial protein synthesis. May act as a fidelity factor of the translation reaction, by catalyzing a one-codon backward translocation of tRNAs on improperly translocated ribosomes. Binds to mitochondrial ribosomes in a GTP-dependent manner.</text>
</comment>
<comment type="catalytic activity">
    <reaction evidence="1">
        <text>GTP + H2O = GDP + phosphate + H(+)</text>
        <dbReference type="Rhea" id="RHEA:19669"/>
        <dbReference type="ChEBI" id="CHEBI:15377"/>
        <dbReference type="ChEBI" id="CHEBI:15378"/>
        <dbReference type="ChEBI" id="CHEBI:37565"/>
        <dbReference type="ChEBI" id="CHEBI:43474"/>
        <dbReference type="ChEBI" id="CHEBI:58189"/>
    </reaction>
</comment>
<comment type="subcellular location">
    <subcellularLocation>
        <location evidence="1">Mitochondrion inner membrane</location>
        <topology evidence="1">Peripheral membrane protein</topology>
        <orientation evidence="1">Matrix side</orientation>
    </subcellularLocation>
</comment>
<comment type="miscellaneous">
    <text evidence="1">This protein may be expected to contain an N-terminal transit peptide but none has been predicted.</text>
</comment>
<comment type="similarity">
    <text evidence="2">Belongs to the TRAFAC class translation factor GTPase superfamily. Classic translation factor GTPase family. LepA subfamily.</text>
</comment>
<sequence>MSMKKTAAVEDKKISLDKESYIKSVQERIAKIPISNYRNFSIVAHVDHGKSTLSDRLLELTGVIQPGDANKQVLDKLDVERERGITVKAQTCSMFYVDPKSKEEYLLHLVDTPGHVDFRAEVSRSYASCGGALLLIDASQGVQAQTVANFYLAYSMGLKLIPVINKIDLDAADIPRAMDQVETTFELPREDCIPVSAKTGLNIENIIPAIIRDIPGPRGSVDKPLKALLVDSWHDPYVGVVMLIHVVDGVVKKGMKLLSAHSEKRYDVKEVGIMYPDKMPMDCVKAGQVAYIIPGMRNPREAMIGDTFYQYGKHEGLEPLPGFEEPKPMVFVGAFPADGGEFKVMNDHMENLVLNDRSVTLEKETSNALGLGWRLGFLGSLHASVFKERLENEYGAKIILTAPTVPYKLIFKDGEESIVTNPDEFPGADFRNHNIEMLMEPYVNALMTIPDEYIGTVMSLCENNRGIQKELEYLTTGQVLLKYEIPLAQLVEDFFGKLKGCTKGYASLDYEDAGYKKSDIVKMELCVNGEPQDALTQVMHRSQVLSRGKEYVTRFKEYLKFQLFEVAIQAKVNNKVVARETIKAKRKDVTQKLHAADISRRKKLLSRQKEGKKQMKATGKISINQEAYQAFLRRAD</sequence>